<keyword id="KW-0010">Activator</keyword>
<keyword id="KW-0012">Acyltransferase</keyword>
<keyword id="KW-0963">Cytoplasm</keyword>
<keyword id="KW-0479">Metal-binding</keyword>
<keyword id="KW-0539">Nucleus</keyword>
<keyword id="KW-1185">Reference proteome</keyword>
<keyword id="KW-0804">Transcription</keyword>
<keyword id="KW-0805">Transcription regulation</keyword>
<keyword id="KW-0808">Transferase</keyword>
<keyword id="KW-0819">tRNA processing</keyword>
<accession>P0CQ14</accession>
<accession>Q560B4</accession>
<accession>Q5KPB7</accession>
<organism>
    <name type="scientific">Cryptococcus neoformans var. neoformans serotype D (strain JEC21 / ATCC MYA-565)</name>
    <name type="common">Filobasidiella neoformans</name>
    <dbReference type="NCBI Taxonomy" id="214684"/>
    <lineage>
        <taxon>Eukaryota</taxon>
        <taxon>Fungi</taxon>
        <taxon>Dikarya</taxon>
        <taxon>Basidiomycota</taxon>
        <taxon>Agaricomycotina</taxon>
        <taxon>Tremellomycetes</taxon>
        <taxon>Tremellales</taxon>
        <taxon>Cryptococcaceae</taxon>
        <taxon>Cryptococcus</taxon>
        <taxon>Cryptococcus neoformans species complex</taxon>
    </lineage>
</organism>
<dbReference type="EC" id="2.3.1.234" evidence="1"/>
<dbReference type="EMBL" id="AE017341">
    <property type="protein sequence ID" value="AAW40851.2"/>
    <property type="molecule type" value="Genomic_DNA"/>
</dbReference>
<dbReference type="RefSeq" id="XP_566670.1">
    <property type="nucleotide sequence ID" value="XM_566670.1"/>
</dbReference>
<dbReference type="SMR" id="P0CQ14"/>
<dbReference type="FunCoup" id="P0CQ14">
    <property type="interactions" value="168"/>
</dbReference>
<dbReference type="STRING" id="214684.P0CQ14"/>
<dbReference type="PaxDb" id="214684-P0CQ14"/>
<dbReference type="EnsemblFungi" id="AAW40851">
    <property type="protein sequence ID" value="AAW40851"/>
    <property type="gene ID" value="CNA03390"/>
</dbReference>
<dbReference type="eggNOG" id="KOG2708">
    <property type="taxonomic scope" value="Eukaryota"/>
</dbReference>
<dbReference type="HOGENOM" id="CLU_023208_2_2_1"/>
<dbReference type="InParanoid" id="P0CQ14"/>
<dbReference type="Proteomes" id="UP000002149">
    <property type="component" value="Chromosome 1"/>
</dbReference>
<dbReference type="GO" id="GO:0000785">
    <property type="term" value="C:chromatin"/>
    <property type="evidence" value="ECO:0007669"/>
    <property type="project" value="EnsemblFungi"/>
</dbReference>
<dbReference type="GO" id="GO:0005737">
    <property type="term" value="C:cytoplasm"/>
    <property type="evidence" value="ECO:0000318"/>
    <property type="project" value="GO_Central"/>
</dbReference>
<dbReference type="GO" id="GO:0000408">
    <property type="term" value="C:EKC/KEOPS complex"/>
    <property type="evidence" value="ECO:0000318"/>
    <property type="project" value="GO_Central"/>
</dbReference>
<dbReference type="GO" id="GO:0005634">
    <property type="term" value="C:nucleus"/>
    <property type="evidence" value="ECO:0007669"/>
    <property type="project" value="UniProtKB-SubCell"/>
</dbReference>
<dbReference type="GO" id="GO:0031490">
    <property type="term" value="F:chromatin DNA binding"/>
    <property type="evidence" value="ECO:0007669"/>
    <property type="project" value="EnsemblFungi"/>
</dbReference>
<dbReference type="GO" id="GO:0046872">
    <property type="term" value="F:metal ion binding"/>
    <property type="evidence" value="ECO:0007669"/>
    <property type="project" value="UniProtKB-KW"/>
</dbReference>
<dbReference type="GO" id="GO:0061711">
    <property type="term" value="F:N(6)-L-threonylcarbamoyladenine synthase activity"/>
    <property type="evidence" value="ECO:0007669"/>
    <property type="project" value="UniProtKB-EC"/>
</dbReference>
<dbReference type="GO" id="GO:0008252">
    <property type="term" value="F:nucleotidase activity"/>
    <property type="evidence" value="ECO:0007669"/>
    <property type="project" value="EnsemblFungi"/>
</dbReference>
<dbReference type="GO" id="GO:0045944">
    <property type="term" value="P:positive regulation of transcription by RNA polymerase II"/>
    <property type="evidence" value="ECO:0007669"/>
    <property type="project" value="EnsemblFungi"/>
</dbReference>
<dbReference type="GO" id="GO:0000722">
    <property type="term" value="P:telomere maintenance via recombination"/>
    <property type="evidence" value="ECO:0007669"/>
    <property type="project" value="EnsemblFungi"/>
</dbReference>
<dbReference type="GO" id="GO:0002949">
    <property type="term" value="P:tRNA threonylcarbamoyladenosine modification"/>
    <property type="evidence" value="ECO:0007669"/>
    <property type="project" value="UniProtKB-UniRule"/>
</dbReference>
<dbReference type="CDD" id="cd24132">
    <property type="entry name" value="ASKHA_NBD_OSGEP_like_euk"/>
    <property type="match status" value="1"/>
</dbReference>
<dbReference type="FunFam" id="3.30.420.40:FF:000141">
    <property type="entry name" value="Probable tRNA N6-adenosine threonylcarbamoyltransferase"/>
    <property type="match status" value="1"/>
</dbReference>
<dbReference type="FunFam" id="3.30.420.40:FF:000295">
    <property type="entry name" value="Probable tRNA N6-adenosine threonylcarbamoyltransferase"/>
    <property type="match status" value="1"/>
</dbReference>
<dbReference type="Gene3D" id="3.30.420.40">
    <property type="match status" value="2"/>
</dbReference>
<dbReference type="HAMAP" id="MF_01446">
    <property type="entry name" value="Kae1"/>
    <property type="match status" value="1"/>
</dbReference>
<dbReference type="InterPro" id="IPR043129">
    <property type="entry name" value="ATPase_NBD"/>
</dbReference>
<dbReference type="InterPro" id="IPR000905">
    <property type="entry name" value="Gcp-like_dom"/>
</dbReference>
<dbReference type="InterPro" id="IPR017861">
    <property type="entry name" value="KAE1/TsaD"/>
</dbReference>
<dbReference type="InterPro" id="IPR034680">
    <property type="entry name" value="Kae1_archaea_euk"/>
</dbReference>
<dbReference type="InterPro" id="IPR017860">
    <property type="entry name" value="Peptidase_M22_CS"/>
</dbReference>
<dbReference type="NCBIfam" id="TIGR03722">
    <property type="entry name" value="arch_KAE1"/>
    <property type="match status" value="1"/>
</dbReference>
<dbReference type="NCBIfam" id="TIGR00329">
    <property type="entry name" value="gcp_kae1"/>
    <property type="match status" value="1"/>
</dbReference>
<dbReference type="PANTHER" id="PTHR11735">
    <property type="entry name" value="TRNA N6-ADENOSINE THREONYLCARBAMOYLTRANSFERASE"/>
    <property type="match status" value="1"/>
</dbReference>
<dbReference type="PANTHER" id="PTHR11735:SF14">
    <property type="entry name" value="TRNA N6-ADENOSINE THREONYLCARBAMOYLTRANSFERASE"/>
    <property type="match status" value="1"/>
</dbReference>
<dbReference type="Pfam" id="PF00814">
    <property type="entry name" value="TsaD"/>
    <property type="match status" value="1"/>
</dbReference>
<dbReference type="PRINTS" id="PR00789">
    <property type="entry name" value="OSIALOPTASE"/>
</dbReference>
<dbReference type="SUPFAM" id="SSF53067">
    <property type="entry name" value="Actin-like ATPase domain"/>
    <property type="match status" value="2"/>
</dbReference>
<dbReference type="PROSITE" id="PS01016">
    <property type="entry name" value="GLYCOPROTEASE"/>
    <property type="match status" value="1"/>
</dbReference>
<sequence>MKQSPLHRPSRPLLALGIEGSANKLGCGIISHSPSPTGGPTLVMVLSNVRHTYITPPGEGFLPSDTARHHREWVVKVIEEAVRKAGVRMGDLDCIAFTKGPGMGTPLQVGALVARTLSLLHNIPLVGVNHCVGHIEMGRQITSSHNPIVLYVSGGNTQVIAYSQQRYRIFGETLDIAIGNCLDRFARVIGLRNDPSPGYNIEKEAKKGKRLVQLPYGTKGMDVSLAGILHSVEAYTKDKRYRSWDQVNDVEEDIITPYDLCFSLQETTFAMLVEITERAMAHVGAKDVLIVGGVGCNLRLQEMMGIMASERGGRVFATDESFCIDNGIMIAQAGLLAFRMGNTMPLEKTGVTQRYRTDAVHVAWRA</sequence>
<feature type="chain" id="PRO_0000278933" description="tRNA N6-adenosine threonylcarbamoyltransferase">
    <location>
        <begin position="1"/>
        <end position="366"/>
    </location>
</feature>
<feature type="binding site" evidence="1">
    <location>
        <position position="130"/>
    </location>
    <ligand>
        <name>a divalent metal cation</name>
        <dbReference type="ChEBI" id="CHEBI:60240"/>
    </ligand>
</feature>
<feature type="binding site" evidence="1">
    <location>
        <position position="134"/>
    </location>
    <ligand>
        <name>a divalent metal cation</name>
        <dbReference type="ChEBI" id="CHEBI:60240"/>
    </ligand>
</feature>
<feature type="binding site" evidence="1">
    <location>
        <begin position="151"/>
        <end position="155"/>
    </location>
    <ligand>
        <name>substrate</name>
    </ligand>
</feature>
<feature type="binding site" evidence="1">
    <location>
        <position position="151"/>
    </location>
    <ligand>
        <name>a divalent metal cation</name>
        <dbReference type="ChEBI" id="CHEBI:60240"/>
    </ligand>
</feature>
<feature type="binding site" evidence="1">
    <location>
        <position position="183"/>
    </location>
    <ligand>
        <name>substrate</name>
    </ligand>
</feature>
<feature type="binding site" evidence="1">
    <location>
        <position position="198"/>
    </location>
    <ligand>
        <name>substrate</name>
    </ligand>
</feature>
<feature type="binding site" evidence="1">
    <location>
        <position position="202"/>
    </location>
    <ligand>
        <name>substrate</name>
    </ligand>
</feature>
<feature type="binding site" evidence="1">
    <location>
        <position position="297"/>
    </location>
    <ligand>
        <name>substrate</name>
    </ligand>
</feature>
<feature type="binding site" evidence="1">
    <location>
        <position position="325"/>
    </location>
    <ligand>
        <name>a divalent metal cation</name>
        <dbReference type="ChEBI" id="CHEBI:60240"/>
    </ligand>
</feature>
<proteinExistence type="inferred from homology"/>
<reference key="1">
    <citation type="journal article" date="2005" name="Science">
        <title>The genome of the basidiomycetous yeast and human pathogen Cryptococcus neoformans.</title>
        <authorList>
            <person name="Loftus B.J."/>
            <person name="Fung E."/>
            <person name="Roncaglia P."/>
            <person name="Rowley D."/>
            <person name="Amedeo P."/>
            <person name="Bruno D."/>
            <person name="Vamathevan J."/>
            <person name="Miranda M."/>
            <person name="Anderson I.J."/>
            <person name="Fraser J.A."/>
            <person name="Allen J.E."/>
            <person name="Bosdet I.E."/>
            <person name="Brent M.R."/>
            <person name="Chiu R."/>
            <person name="Doering T.L."/>
            <person name="Donlin M.J."/>
            <person name="D'Souza C.A."/>
            <person name="Fox D.S."/>
            <person name="Grinberg V."/>
            <person name="Fu J."/>
            <person name="Fukushima M."/>
            <person name="Haas B.J."/>
            <person name="Huang J.C."/>
            <person name="Janbon G."/>
            <person name="Jones S.J.M."/>
            <person name="Koo H.L."/>
            <person name="Krzywinski M.I."/>
            <person name="Kwon-Chung K.J."/>
            <person name="Lengeler K.B."/>
            <person name="Maiti R."/>
            <person name="Marra M.A."/>
            <person name="Marra R.E."/>
            <person name="Mathewson C.A."/>
            <person name="Mitchell T.G."/>
            <person name="Pertea M."/>
            <person name="Riggs F.R."/>
            <person name="Salzberg S.L."/>
            <person name="Schein J.E."/>
            <person name="Shvartsbeyn A."/>
            <person name="Shin H."/>
            <person name="Shumway M."/>
            <person name="Specht C.A."/>
            <person name="Suh B.B."/>
            <person name="Tenney A."/>
            <person name="Utterback T.R."/>
            <person name="Wickes B.L."/>
            <person name="Wortman J.R."/>
            <person name="Wye N.H."/>
            <person name="Kronstad J.W."/>
            <person name="Lodge J.K."/>
            <person name="Heitman J."/>
            <person name="Davis R.W."/>
            <person name="Fraser C.M."/>
            <person name="Hyman R.W."/>
        </authorList>
    </citation>
    <scope>NUCLEOTIDE SEQUENCE [LARGE SCALE GENOMIC DNA]</scope>
    <source>
        <strain>JEC21 / ATCC MYA-565</strain>
    </source>
</reference>
<name>KAE1_CRYNJ</name>
<protein>
    <recommendedName>
        <fullName evidence="1">tRNA N6-adenosine threonylcarbamoyltransferase</fullName>
        <ecNumber evidence="1">2.3.1.234</ecNumber>
    </recommendedName>
    <alternativeName>
        <fullName>N6-L-threonylcarbamoyladenine synthase</fullName>
        <shortName>t(6)A synthase</shortName>
    </alternativeName>
    <alternativeName>
        <fullName evidence="1">t(6)A37 threonylcarbamoyladenosine biosynthesis protein KAE1</fullName>
    </alternativeName>
    <alternativeName>
        <fullName evidence="1">tRNA threonylcarbamoyladenosine biosynthesis protein KAE1</fullName>
    </alternativeName>
</protein>
<gene>
    <name evidence="1" type="primary">KAE1</name>
    <name type="ordered locus">CNA03390</name>
</gene>
<evidence type="ECO:0000255" key="1">
    <source>
        <dbReference type="HAMAP-Rule" id="MF_03180"/>
    </source>
</evidence>
<comment type="function">
    <text evidence="1">Component of the EKC/KEOPS complex that is required for the formation of a threonylcarbamoyl group on adenosine at position 37 (t(6)A37) in tRNAs that read codons beginning with adenine. The complex is probably involved in the transfer of the threonylcarbamoyl moiety of threonylcarbamoyl-AMP (TC-AMP) to the N6 group of A37. KAE1 likely plays a direct catalytic role in this reaction, but requires other protein(s) of the complex to fulfill this activity. The EKC/KEOPS complex also promotes both telomere uncapping and telomere elongation. The complex is required for efficient recruitment of transcriptional coactivators.</text>
</comment>
<comment type="catalytic activity">
    <reaction evidence="1">
        <text>L-threonylcarbamoyladenylate + adenosine(37) in tRNA = N(6)-L-threonylcarbamoyladenosine(37) in tRNA + AMP + H(+)</text>
        <dbReference type="Rhea" id="RHEA:37059"/>
        <dbReference type="Rhea" id="RHEA-COMP:10162"/>
        <dbReference type="Rhea" id="RHEA-COMP:10163"/>
        <dbReference type="ChEBI" id="CHEBI:15378"/>
        <dbReference type="ChEBI" id="CHEBI:73682"/>
        <dbReference type="ChEBI" id="CHEBI:74411"/>
        <dbReference type="ChEBI" id="CHEBI:74418"/>
        <dbReference type="ChEBI" id="CHEBI:456215"/>
        <dbReference type="EC" id="2.3.1.234"/>
    </reaction>
</comment>
<comment type="cofactor">
    <cofactor evidence="1">
        <name>a divalent metal cation</name>
        <dbReference type="ChEBI" id="CHEBI:60240"/>
    </cofactor>
    <text evidence="1">Binds 1 divalent metal cation per subunit.</text>
</comment>
<comment type="subunit">
    <text evidence="1">Component of the EKC/KEOPS complex composed of at least BUD32, CGI121, GON7, KAE1 and PCC1; the whole complex dimerizes.</text>
</comment>
<comment type="subcellular location">
    <subcellularLocation>
        <location evidence="1">Cytoplasm</location>
    </subcellularLocation>
    <subcellularLocation>
        <location evidence="1">Nucleus</location>
    </subcellularLocation>
</comment>
<comment type="similarity">
    <text evidence="1">Belongs to the KAE1 / TsaD family.</text>
</comment>